<feature type="chain" id="PRO_0000185098" description="Intermediate cleaving peptidase 55">
    <location>
        <begin position="1"/>
        <end position="511"/>
    </location>
</feature>
<feature type="binding site" evidence="1">
    <location>
        <position position="327"/>
    </location>
    <ligand>
        <name>Mn(2+)</name>
        <dbReference type="ChEBI" id="CHEBI:29035"/>
        <label>2</label>
    </ligand>
</feature>
<feature type="binding site" evidence="1">
    <location>
        <position position="338"/>
    </location>
    <ligand>
        <name>Mn(2+)</name>
        <dbReference type="ChEBI" id="CHEBI:29035"/>
        <label>1</label>
    </ligand>
</feature>
<feature type="binding site" evidence="1">
    <location>
        <position position="338"/>
    </location>
    <ligand>
        <name>Mn(2+)</name>
        <dbReference type="ChEBI" id="CHEBI:29035"/>
        <label>2</label>
    </ligand>
</feature>
<feature type="binding site" evidence="1">
    <location>
        <position position="417"/>
    </location>
    <ligand>
        <name>Mn(2+)</name>
        <dbReference type="ChEBI" id="CHEBI:29035"/>
        <label>1</label>
    </ligand>
</feature>
<feature type="binding site" evidence="1">
    <location>
        <position position="444"/>
    </location>
    <ligand>
        <name>Mn(2+)</name>
        <dbReference type="ChEBI" id="CHEBI:29035"/>
        <label>1</label>
    </ligand>
</feature>
<feature type="binding site" evidence="1">
    <location>
        <position position="467"/>
    </location>
    <ligand>
        <name>Mn(2+)</name>
        <dbReference type="ChEBI" id="CHEBI:29035"/>
        <label>1</label>
    </ligand>
</feature>
<feature type="binding site" evidence="1">
    <location>
        <position position="467"/>
    </location>
    <ligand>
        <name>Mn(2+)</name>
        <dbReference type="ChEBI" id="CHEBI:29035"/>
        <label>2</label>
    </ligand>
</feature>
<feature type="strand" evidence="7">
    <location>
        <begin position="60"/>
        <end position="62"/>
    </location>
</feature>
<feature type="helix" evidence="7">
    <location>
        <begin position="67"/>
        <end position="78"/>
    </location>
</feature>
<feature type="strand" evidence="7">
    <location>
        <begin position="83"/>
        <end position="90"/>
    </location>
</feature>
<feature type="helix" evidence="7">
    <location>
        <begin position="109"/>
        <end position="115"/>
    </location>
</feature>
<feature type="strand" evidence="7">
    <location>
        <begin position="123"/>
        <end position="128"/>
    </location>
</feature>
<feature type="helix" evidence="7">
    <location>
        <begin position="133"/>
        <end position="135"/>
    </location>
</feature>
<feature type="strand" evidence="7">
    <location>
        <begin position="137"/>
        <end position="142"/>
    </location>
</feature>
<feature type="helix" evidence="7">
    <location>
        <begin position="147"/>
        <end position="152"/>
    </location>
</feature>
<feature type="helix" evidence="7">
    <location>
        <begin position="158"/>
        <end position="164"/>
    </location>
</feature>
<feature type="strand" evidence="7">
    <location>
        <begin position="169"/>
        <end position="173"/>
    </location>
</feature>
<feature type="helix" evidence="7">
    <location>
        <begin position="174"/>
        <end position="176"/>
    </location>
</feature>
<feature type="helix" evidence="7">
    <location>
        <begin position="177"/>
        <end position="186"/>
    </location>
</feature>
<feature type="strand" evidence="7">
    <location>
        <begin position="189"/>
        <end position="192"/>
    </location>
</feature>
<feature type="helix" evidence="7">
    <location>
        <begin position="204"/>
        <end position="213"/>
    </location>
</feature>
<feature type="strand" evidence="8">
    <location>
        <begin position="230"/>
        <end position="232"/>
    </location>
</feature>
<feature type="helix" evidence="7">
    <location>
        <begin position="235"/>
        <end position="242"/>
    </location>
</feature>
<feature type="helix" evidence="7">
    <location>
        <begin position="247"/>
        <end position="268"/>
    </location>
</feature>
<feature type="helix" evidence="7">
    <location>
        <begin position="275"/>
        <end position="289"/>
    </location>
</feature>
<feature type="strand" evidence="7">
    <location>
        <begin position="292"/>
        <end position="296"/>
    </location>
</feature>
<feature type="strand" evidence="7">
    <location>
        <begin position="299"/>
        <end position="302"/>
    </location>
</feature>
<feature type="helix" evidence="7">
    <location>
        <begin position="303"/>
        <end position="307"/>
    </location>
</feature>
<feature type="strand" evidence="7">
    <location>
        <begin position="322"/>
        <end position="327"/>
    </location>
</feature>
<feature type="strand" evidence="7">
    <location>
        <begin position="330"/>
        <end position="332"/>
    </location>
</feature>
<feature type="strand" evidence="7">
    <location>
        <begin position="340"/>
        <end position="344"/>
    </location>
</feature>
<feature type="helix" evidence="7">
    <location>
        <begin position="351"/>
        <end position="369"/>
    </location>
</feature>
<feature type="helix" evidence="7">
    <location>
        <begin position="373"/>
        <end position="375"/>
    </location>
</feature>
<feature type="helix" evidence="7">
    <location>
        <begin position="379"/>
        <end position="396"/>
    </location>
</feature>
<feature type="helix" evidence="7">
    <location>
        <begin position="407"/>
        <end position="410"/>
    </location>
</feature>
<feature type="strand" evidence="7">
    <location>
        <begin position="420"/>
        <end position="424"/>
    </location>
</feature>
<feature type="strand" evidence="7">
    <location>
        <begin position="440"/>
        <end position="443"/>
    </location>
</feature>
<feature type="strand" evidence="7">
    <location>
        <begin position="446"/>
        <end position="449"/>
    </location>
</feature>
<feature type="turn" evidence="7">
    <location>
        <begin position="457"/>
        <end position="461"/>
    </location>
</feature>
<feature type="strand" evidence="7">
    <location>
        <begin position="462"/>
        <end position="465"/>
    </location>
</feature>
<feature type="strand" evidence="7">
    <location>
        <begin position="467"/>
        <end position="479"/>
    </location>
</feature>
<feature type="turn" evidence="7">
    <location>
        <begin position="480"/>
        <end position="483"/>
    </location>
</feature>
<feature type="helix" evidence="7">
    <location>
        <begin position="488"/>
        <end position="497"/>
    </location>
</feature>
<reference key="1">
    <citation type="journal article" date="1997" name="Nature">
        <title>The nucleotide sequence of Saccharomyces cerevisiae chromosome V.</title>
        <authorList>
            <person name="Dietrich F.S."/>
            <person name="Mulligan J.T."/>
            <person name="Hennessy K.M."/>
            <person name="Yelton M.A."/>
            <person name="Allen E."/>
            <person name="Araujo R."/>
            <person name="Aviles E."/>
            <person name="Berno A."/>
            <person name="Brennan T."/>
            <person name="Carpenter J."/>
            <person name="Chen E."/>
            <person name="Cherry J.M."/>
            <person name="Chung E."/>
            <person name="Duncan M."/>
            <person name="Guzman E."/>
            <person name="Hartzell G."/>
            <person name="Hunicke-Smith S."/>
            <person name="Hyman R.W."/>
            <person name="Kayser A."/>
            <person name="Komp C."/>
            <person name="Lashkari D."/>
            <person name="Lew H."/>
            <person name="Lin D."/>
            <person name="Mosedale D."/>
            <person name="Nakahara K."/>
            <person name="Namath A."/>
            <person name="Norgren R."/>
            <person name="Oefner P."/>
            <person name="Oh C."/>
            <person name="Petel F.X."/>
            <person name="Roberts D."/>
            <person name="Sehl P."/>
            <person name="Schramm S."/>
            <person name="Shogren T."/>
            <person name="Smith V."/>
            <person name="Taylor P."/>
            <person name="Wei Y."/>
            <person name="Botstein D."/>
            <person name="Davis R.W."/>
        </authorList>
    </citation>
    <scope>NUCLEOTIDE SEQUENCE [LARGE SCALE GENOMIC DNA]</scope>
    <source>
        <strain>ATCC 204508 / S288c</strain>
    </source>
</reference>
<reference key="2">
    <citation type="journal article" date="2014" name="G3 (Bethesda)">
        <title>The reference genome sequence of Saccharomyces cerevisiae: Then and now.</title>
        <authorList>
            <person name="Engel S.R."/>
            <person name="Dietrich F.S."/>
            <person name="Fisk D.G."/>
            <person name="Binkley G."/>
            <person name="Balakrishnan R."/>
            <person name="Costanzo M.C."/>
            <person name="Dwight S.S."/>
            <person name="Hitz B.C."/>
            <person name="Karra K."/>
            <person name="Nash R.S."/>
            <person name="Weng S."/>
            <person name="Wong E.D."/>
            <person name="Lloyd P."/>
            <person name="Skrzypek M.S."/>
            <person name="Miyasato S.R."/>
            <person name="Simison M."/>
            <person name="Cherry J.M."/>
        </authorList>
    </citation>
    <scope>GENOME REANNOTATION</scope>
    <source>
        <strain>ATCC 204508 / S288c</strain>
    </source>
</reference>
<reference key="3">
    <citation type="journal article" date="2003" name="Nature">
        <title>Global analysis of protein localization in budding yeast.</title>
        <authorList>
            <person name="Huh W.-K."/>
            <person name="Falvo J.V."/>
            <person name="Gerke L.C."/>
            <person name="Carroll A.S."/>
            <person name="Howson R.W."/>
            <person name="Weissman J.S."/>
            <person name="O'Shea E.K."/>
        </authorList>
    </citation>
    <scope>SUBCELLULAR LOCATION [LARGE SCALE ANALYSIS]</scope>
</reference>
<reference key="4">
    <citation type="journal article" date="2003" name="Nature">
        <title>Global analysis of protein expression in yeast.</title>
        <authorList>
            <person name="Ghaemmaghami S."/>
            <person name="Huh W.-K."/>
            <person name="Bower K."/>
            <person name="Howson R.W."/>
            <person name="Belle A."/>
            <person name="Dephoure N."/>
            <person name="O'Shea E.K."/>
            <person name="Weissman J.S."/>
        </authorList>
    </citation>
    <scope>LEVEL OF PROTEIN EXPRESSION [LARGE SCALE ANALYSIS]</scope>
</reference>
<reference key="5">
    <citation type="journal article" date="2006" name="J. Proteome Res.">
        <title>Toward the complete yeast mitochondrial proteome: multidimensional separation techniques for mitochondrial proteomics.</title>
        <authorList>
            <person name="Reinders J."/>
            <person name="Zahedi R.P."/>
            <person name="Pfanner N."/>
            <person name="Meisinger C."/>
            <person name="Sickmann A."/>
        </authorList>
    </citation>
    <scope>SUBCELLULAR LOCATION [LARGE SCALE ANALYSIS]</scope>
    <scope>IDENTIFICATION BY MASS SPECTROMETRY</scope>
</reference>
<reference key="6">
    <citation type="journal article" date="2009" name="Cell">
        <title>Global analysis of the mitochondrial N-proteome identifies a processing peptidase critical for protein stability.</title>
        <authorList>
            <person name="Vogtle F.N."/>
            <person name="Wortelkamp S."/>
            <person name="Zahedi R.P."/>
            <person name="Becker D."/>
            <person name="Leidhold C."/>
            <person name="Gevaert K."/>
            <person name="Kellermann J."/>
            <person name="Voos W."/>
            <person name="Sickmann A."/>
            <person name="Pfanner N."/>
            <person name="Meisinger C."/>
        </authorList>
    </citation>
    <scope>IDENTIFICATION BY MASS SPECTROMETRY</scope>
    <scope>SUBCELLULAR LOCATION</scope>
    <scope>FUNCTION</scope>
    <scope>CATALYTIC ACTIVITY</scope>
</reference>
<reference key="7">
    <citation type="journal article" date="2009" name="J. Biol. Chem.">
        <title>Dual targeting of Nfs1 and discovery of its novel processing enzyme, Icp55.</title>
        <authorList>
            <person name="Naamati A."/>
            <person name="Regev-Rudzki N."/>
            <person name="Galperin S."/>
            <person name="Lill R."/>
            <person name="Pines O."/>
        </authorList>
    </citation>
    <scope>FUNCTION</scope>
    <scope>CATALYTIC ACTIVITY</scope>
    <scope>SUBCELLULAR LOCATION</scope>
</reference>
<accession>P40051</accession>
<accession>D3DLY4</accession>
<name>ICP55_YEAST</name>
<organism>
    <name type="scientific">Saccharomyces cerevisiae (strain ATCC 204508 / S288c)</name>
    <name type="common">Baker's yeast</name>
    <dbReference type="NCBI Taxonomy" id="559292"/>
    <lineage>
        <taxon>Eukaryota</taxon>
        <taxon>Fungi</taxon>
        <taxon>Dikarya</taxon>
        <taxon>Ascomycota</taxon>
        <taxon>Saccharomycotina</taxon>
        <taxon>Saccharomycetes</taxon>
        <taxon>Saccharomycetales</taxon>
        <taxon>Saccharomycetaceae</taxon>
        <taxon>Saccharomyces</taxon>
    </lineage>
</organism>
<keyword id="KW-0002">3D-structure</keyword>
<keyword id="KW-0031">Aminopeptidase</keyword>
<keyword id="KW-0378">Hydrolase</keyword>
<keyword id="KW-0464">Manganese</keyword>
<keyword id="KW-0472">Membrane</keyword>
<keyword id="KW-0479">Metal-binding</keyword>
<keyword id="KW-0482">Metalloprotease</keyword>
<keyword id="KW-0496">Mitochondrion</keyword>
<keyword id="KW-0999">Mitochondrion inner membrane</keyword>
<keyword id="KW-0539">Nucleus</keyword>
<keyword id="KW-0645">Protease</keyword>
<keyword id="KW-1185">Reference proteome</keyword>
<gene>
    <name type="primary">ICP55</name>
    <name type="ordered locus">YER078C</name>
</gene>
<comment type="function">
    <text evidence="4 5">Aminopeptidase which cleaves preprotein intermediates that carry destabilizing N-ter amino acid residues after the mitochondrial processing peptidase (MPP) cleavage site and is thus critical for stabilization of the mitochondrial proteome.</text>
</comment>
<comment type="catalytic activity">
    <reaction evidence="4 5">
        <text>The enzyme cleaves the 36-Pro-Pro-37 bond of cysteine desulfurase (EC 2.8.1.7) removing three amino acid residues (Tyr-Ser-Pro) from the N-terminus after cleavage by mitochondrial processing peptidase.</text>
        <dbReference type="EC" id="3.4.11.26"/>
    </reaction>
</comment>
<comment type="cofactor">
    <cofactor evidence="6">
        <name>Mn(2+)</name>
        <dbReference type="ChEBI" id="CHEBI:29035"/>
    </cofactor>
    <text evidence="6">Binds 2 manganese ions per subunit.</text>
</comment>
<comment type="subcellular location">
    <subcellularLocation>
        <location evidence="4">Nucleus</location>
    </subcellularLocation>
    <subcellularLocation>
        <location evidence="3 4">Mitochondrion inner membrane</location>
        <topology evidence="4">Peripheral membrane protein</topology>
        <orientation evidence="4">Matrix side</orientation>
    </subcellularLocation>
    <text evidence="4">Has the same dual localization (mitochondrion and nucleus) as one of its substrate, NFS1.</text>
</comment>
<comment type="miscellaneous">
    <text evidence="2">Present with 5080 molecules/cell in log phase SD medium.</text>
</comment>
<comment type="similarity">
    <text evidence="6">Belongs to the peptidase M24B family.</text>
</comment>
<evidence type="ECO:0000255" key="1"/>
<evidence type="ECO:0000269" key="2">
    <source>
    </source>
</evidence>
<evidence type="ECO:0000269" key="3">
    <source>
    </source>
</evidence>
<evidence type="ECO:0000269" key="4">
    <source>
    </source>
</evidence>
<evidence type="ECO:0000269" key="5">
    <source>
    </source>
</evidence>
<evidence type="ECO:0000305" key="6"/>
<evidence type="ECO:0007829" key="7">
    <source>
        <dbReference type="PDB" id="6A9T"/>
    </source>
</evidence>
<evidence type="ECO:0007829" key="8">
    <source>
        <dbReference type="PDB" id="6A9U"/>
    </source>
</evidence>
<sequence length="511" mass="57990">MLHRINPVRFSMQSCQRYFSKLVSPLEQHKSNTFTNRVRIPIEAGQPLHETRPFLIKSGELTPGISALEYYERRIRLAETLPPKSCVILAGNDIQFASGAVFYPFQQENDLFYLSGWNEPNSVMILEKPTDSLSDTIFHMLVPPKDAFAEKWEGFRSGVYGVQEIFNADESASINDLSKYLPKIINRNDFIYFDMLSTSNPSSSNFKHIKSLLDGSGNSNRSLNSIANKTIKPISKRIAEFRKIKSPQELRIMRRAGQISGRSFNQAFAKRFRNERTLDSFLHYKFISGGCDKDAYIPVVATGSNSLCIHYTRNDDVMFDDEMVLVDAAGSLGGYCADISRTWPNSGKFTDAQRDLYEAVLNVQRDCIKLCKASNNYSLHDIHEKSITLMKQELKNLGIDKVSGWNVEKLYPHYIGHNLGLDVHDVPKVSRYEPLKVGQVITIEPGLYIPNEESFPSYFRNVGIRIEDDIAIGEDTYTNLTVEAVKEIDDLENVMQNGLSTKFEEDQVAPL</sequence>
<proteinExistence type="evidence at protein level"/>
<dbReference type="EC" id="3.4.11.26" evidence="4 5"/>
<dbReference type="EMBL" id="U18839">
    <property type="protein sequence ID" value="AAB64633.1"/>
    <property type="molecule type" value="Genomic_DNA"/>
</dbReference>
<dbReference type="EMBL" id="BK006939">
    <property type="protein sequence ID" value="DAA07738.1"/>
    <property type="molecule type" value="Genomic_DNA"/>
</dbReference>
<dbReference type="PIR" id="S50581">
    <property type="entry name" value="S50581"/>
</dbReference>
<dbReference type="RefSeq" id="NP_011001.1">
    <property type="nucleotide sequence ID" value="NM_001178969.1"/>
</dbReference>
<dbReference type="PDB" id="6A9T">
    <property type="method" value="X-ray"/>
    <property type="resolution" value="2.15 A"/>
    <property type="chains" value="A=58-511"/>
</dbReference>
<dbReference type="PDB" id="6A9U">
    <property type="method" value="X-ray"/>
    <property type="resolution" value="2.40 A"/>
    <property type="chains" value="A=58-511"/>
</dbReference>
<dbReference type="PDB" id="6A9V">
    <property type="method" value="X-ray"/>
    <property type="resolution" value="2.90 A"/>
    <property type="chains" value="A=44-511"/>
</dbReference>
<dbReference type="PDBsum" id="6A9T"/>
<dbReference type="PDBsum" id="6A9U"/>
<dbReference type="PDBsum" id="6A9V"/>
<dbReference type="SMR" id="P40051"/>
<dbReference type="BioGRID" id="36823">
    <property type="interactions" value="126"/>
</dbReference>
<dbReference type="DIP" id="DIP-4941N"/>
<dbReference type="FunCoup" id="P40051">
    <property type="interactions" value="596"/>
</dbReference>
<dbReference type="IntAct" id="P40051">
    <property type="interactions" value="5"/>
</dbReference>
<dbReference type="MINT" id="P40051"/>
<dbReference type="STRING" id="4932.YER078C"/>
<dbReference type="PaxDb" id="4932-YER078C"/>
<dbReference type="PeptideAtlas" id="P40051"/>
<dbReference type="EnsemblFungi" id="YER078C_mRNA">
    <property type="protein sequence ID" value="YER078C"/>
    <property type="gene ID" value="YER078C"/>
</dbReference>
<dbReference type="GeneID" id="856811"/>
<dbReference type="KEGG" id="sce:YER078C"/>
<dbReference type="AGR" id="SGD:S000000880"/>
<dbReference type="SGD" id="S000000880">
    <property type="gene designation" value="ICP55"/>
</dbReference>
<dbReference type="VEuPathDB" id="FungiDB:YER078C"/>
<dbReference type="eggNOG" id="KOG2414">
    <property type="taxonomic scope" value="Eukaryota"/>
</dbReference>
<dbReference type="GeneTree" id="ENSGT00940000153657"/>
<dbReference type="HOGENOM" id="CLU_017266_1_1_1"/>
<dbReference type="InParanoid" id="P40051"/>
<dbReference type="OMA" id="DSYFWYL"/>
<dbReference type="OrthoDB" id="4215474at2759"/>
<dbReference type="BioCyc" id="MetaCyc:G3O-30249-MONOMER"/>
<dbReference type="BioCyc" id="YEAST:G3O-30249-MONOMER"/>
<dbReference type="BRENDA" id="3.4.11.26">
    <property type="organism ID" value="984"/>
</dbReference>
<dbReference type="BRENDA" id="3.4.11.9">
    <property type="organism ID" value="984"/>
</dbReference>
<dbReference type="BioGRID-ORCS" id="856811">
    <property type="hits" value="5 hits in 10 CRISPR screens"/>
</dbReference>
<dbReference type="PRO" id="PR:P40051"/>
<dbReference type="Proteomes" id="UP000002311">
    <property type="component" value="Chromosome V"/>
</dbReference>
<dbReference type="RNAct" id="P40051">
    <property type="molecule type" value="protein"/>
</dbReference>
<dbReference type="GO" id="GO:0005743">
    <property type="term" value="C:mitochondrial inner membrane"/>
    <property type="evidence" value="ECO:0007669"/>
    <property type="project" value="UniProtKB-SubCell"/>
</dbReference>
<dbReference type="GO" id="GO:0005739">
    <property type="term" value="C:mitochondrion"/>
    <property type="evidence" value="ECO:0000314"/>
    <property type="project" value="SGD"/>
</dbReference>
<dbReference type="GO" id="GO:0005634">
    <property type="term" value="C:nucleus"/>
    <property type="evidence" value="ECO:0000314"/>
    <property type="project" value="SGD"/>
</dbReference>
<dbReference type="GO" id="GO:0004177">
    <property type="term" value="F:aminopeptidase activity"/>
    <property type="evidence" value="ECO:0000314"/>
    <property type="project" value="SGD"/>
</dbReference>
<dbReference type="GO" id="GO:0030145">
    <property type="term" value="F:manganese ion binding"/>
    <property type="evidence" value="ECO:0007669"/>
    <property type="project" value="InterPro"/>
</dbReference>
<dbReference type="GO" id="GO:0070006">
    <property type="term" value="F:metalloaminopeptidase activity"/>
    <property type="evidence" value="ECO:0007669"/>
    <property type="project" value="InterPro"/>
</dbReference>
<dbReference type="GO" id="GO:0016485">
    <property type="term" value="P:protein processing"/>
    <property type="evidence" value="ECO:0000315"/>
    <property type="project" value="SGD"/>
</dbReference>
<dbReference type="GO" id="GO:0050821">
    <property type="term" value="P:protein stabilization"/>
    <property type="evidence" value="ECO:0000315"/>
    <property type="project" value="SGD"/>
</dbReference>
<dbReference type="GO" id="GO:0006508">
    <property type="term" value="P:proteolysis"/>
    <property type="evidence" value="ECO:0000318"/>
    <property type="project" value="GO_Central"/>
</dbReference>
<dbReference type="CDD" id="cd01087">
    <property type="entry name" value="Prolidase"/>
    <property type="match status" value="1"/>
</dbReference>
<dbReference type="FunFam" id="3.90.230.10:FF:000026">
    <property type="entry name" value="Intermediate cleaving peptidase 55"/>
    <property type="match status" value="1"/>
</dbReference>
<dbReference type="FunFam" id="3.40.350.10:FF:000025">
    <property type="entry name" value="YER078C-like protein"/>
    <property type="match status" value="1"/>
</dbReference>
<dbReference type="Gene3D" id="3.90.230.10">
    <property type="entry name" value="Creatinase/methionine aminopeptidase superfamily"/>
    <property type="match status" value="1"/>
</dbReference>
<dbReference type="Gene3D" id="3.40.350.10">
    <property type="entry name" value="Creatinase/prolidase N-terminal domain"/>
    <property type="match status" value="1"/>
</dbReference>
<dbReference type="InterPro" id="IPR007865">
    <property type="entry name" value="Aminopep_P_N"/>
</dbReference>
<dbReference type="InterPro" id="IPR029149">
    <property type="entry name" value="Creatin/AminoP/Spt16_N"/>
</dbReference>
<dbReference type="InterPro" id="IPR036005">
    <property type="entry name" value="Creatinase/aminopeptidase-like"/>
</dbReference>
<dbReference type="InterPro" id="IPR000994">
    <property type="entry name" value="Pept_M24"/>
</dbReference>
<dbReference type="InterPro" id="IPR001131">
    <property type="entry name" value="Peptidase_M24B_aminopep-P_CS"/>
</dbReference>
<dbReference type="InterPro" id="IPR052433">
    <property type="entry name" value="X-Pro_dipept-like"/>
</dbReference>
<dbReference type="PANTHER" id="PTHR43226">
    <property type="entry name" value="XAA-PRO AMINOPEPTIDASE 3"/>
    <property type="match status" value="1"/>
</dbReference>
<dbReference type="PANTHER" id="PTHR43226:SF4">
    <property type="entry name" value="XAA-PRO AMINOPEPTIDASE 3"/>
    <property type="match status" value="1"/>
</dbReference>
<dbReference type="Pfam" id="PF05195">
    <property type="entry name" value="AMP_N"/>
    <property type="match status" value="1"/>
</dbReference>
<dbReference type="Pfam" id="PF00557">
    <property type="entry name" value="Peptidase_M24"/>
    <property type="match status" value="1"/>
</dbReference>
<dbReference type="SMART" id="SM01011">
    <property type="entry name" value="AMP_N"/>
    <property type="match status" value="1"/>
</dbReference>
<dbReference type="SUPFAM" id="SSF55920">
    <property type="entry name" value="Creatinase/aminopeptidase"/>
    <property type="match status" value="1"/>
</dbReference>
<dbReference type="SUPFAM" id="SSF53092">
    <property type="entry name" value="Creatinase/prolidase N-terminal domain"/>
    <property type="match status" value="1"/>
</dbReference>
<dbReference type="PROSITE" id="PS00491">
    <property type="entry name" value="PROLINE_PEPTIDASE"/>
    <property type="match status" value="1"/>
</dbReference>
<protein>
    <recommendedName>
        <fullName>Intermediate cleaving peptidase 55</fullName>
        <ecNumber evidence="4 5">3.4.11.26</ecNumber>
    </recommendedName>
    <alternativeName>
        <fullName>Intermediate cleaving peptidase of 55 kDa</fullName>
    </alternativeName>
</protein>